<organism>
    <name type="scientific">Pseudomonas aeruginosa (strain ATCC 15692 / DSM 22644 / CIP 104116 / JCM 14847 / LMG 12228 / 1C / PRS 101 / PAO1)</name>
    <dbReference type="NCBI Taxonomy" id="208964"/>
    <lineage>
        <taxon>Bacteria</taxon>
        <taxon>Pseudomonadati</taxon>
        <taxon>Pseudomonadota</taxon>
        <taxon>Gammaproteobacteria</taxon>
        <taxon>Pseudomonadales</taxon>
        <taxon>Pseudomonadaceae</taxon>
        <taxon>Pseudomonas</taxon>
    </lineage>
</organism>
<reference key="1">
    <citation type="journal article" date="2000" name="Nature">
        <title>Complete genome sequence of Pseudomonas aeruginosa PAO1, an opportunistic pathogen.</title>
        <authorList>
            <person name="Stover C.K."/>
            <person name="Pham X.-Q.T."/>
            <person name="Erwin A.L."/>
            <person name="Mizoguchi S.D."/>
            <person name="Warrener P."/>
            <person name="Hickey M.J."/>
            <person name="Brinkman F.S.L."/>
            <person name="Hufnagle W.O."/>
            <person name="Kowalik D.J."/>
            <person name="Lagrou M."/>
            <person name="Garber R.L."/>
            <person name="Goltry L."/>
            <person name="Tolentino E."/>
            <person name="Westbrock-Wadman S."/>
            <person name="Yuan Y."/>
            <person name="Brody L.L."/>
            <person name="Coulter S.N."/>
            <person name="Folger K.R."/>
            <person name="Kas A."/>
            <person name="Larbig K."/>
            <person name="Lim R.M."/>
            <person name="Smith K.A."/>
            <person name="Spencer D.H."/>
            <person name="Wong G.K.-S."/>
            <person name="Wu Z."/>
            <person name="Paulsen I.T."/>
            <person name="Reizer J."/>
            <person name="Saier M.H. Jr."/>
            <person name="Hancock R.E.W."/>
            <person name="Lory S."/>
            <person name="Olson M.V."/>
        </authorList>
    </citation>
    <scope>NUCLEOTIDE SEQUENCE [LARGE SCALE GENOMIC DNA]</scope>
    <source>
        <strain>ATCC 15692 / DSM 22644 / CIP 104116 / JCM 14847 / LMG 12228 / 1C / PRS 101 / PAO1</strain>
    </source>
</reference>
<accession>Q9HW26</accession>
<feature type="chain" id="PRO_0000205838" description="Nicotinate phosphoribosyltransferase 2">
    <location>
        <begin position="1"/>
        <end position="398"/>
    </location>
</feature>
<feature type="modified residue" description="Phosphohistidine; by autocatalysis" evidence="1">
    <location>
        <position position="224"/>
    </location>
</feature>
<feature type="strand" evidence="2">
    <location>
        <begin position="16"/>
        <end position="18"/>
    </location>
</feature>
<feature type="helix" evidence="2">
    <location>
        <begin position="19"/>
        <end position="31"/>
    </location>
</feature>
<feature type="strand" evidence="2">
    <location>
        <begin position="36"/>
        <end position="43"/>
    </location>
</feature>
<feature type="helix" evidence="2">
    <location>
        <begin position="50"/>
        <end position="52"/>
    </location>
</feature>
<feature type="helix" evidence="2">
    <location>
        <begin position="53"/>
        <end position="65"/>
    </location>
</feature>
<feature type="helix" evidence="2">
    <location>
        <begin position="70"/>
        <end position="77"/>
    </location>
</feature>
<feature type="helix" evidence="2">
    <location>
        <begin position="84"/>
        <end position="92"/>
    </location>
</feature>
<feature type="helix" evidence="2">
    <location>
        <begin position="97"/>
        <end position="99"/>
    </location>
</feature>
<feature type="strand" evidence="2">
    <location>
        <begin position="100"/>
        <end position="105"/>
    </location>
</feature>
<feature type="strand" evidence="2">
    <location>
        <begin position="108"/>
        <end position="116"/>
    </location>
</feature>
<feature type="helix" evidence="2">
    <location>
        <begin position="117"/>
        <end position="120"/>
    </location>
</feature>
<feature type="helix" evidence="2">
    <location>
        <begin position="121"/>
        <end position="123"/>
    </location>
</feature>
<feature type="helix" evidence="2">
    <location>
        <begin position="124"/>
        <end position="139"/>
    </location>
</feature>
<feature type="helix" evidence="2">
    <location>
        <begin position="145"/>
        <end position="160"/>
    </location>
</feature>
<feature type="helix" evidence="2">
    <location>
        <begin position="165"/>
        <end position="168"/>
    </location>
</feature>
<feature type="strand" evidence="2">
    <location>
        <begin position="172"/>
        <end position="175"/>
    </location>
</feature>
<feature type="helix" evidence="2">
    <location>
        <begin position="184"/>
        <end position="197"/>
    </location>
</feature>
<feature type="strand" evidence="2">
    <location>
        <begin position="199"/>
        <end position="207"/>
    </location>
</feature>
<feature type="helix" evidence="2">
    <location>
        <begin position="208"/>
        <end position="213"/>
    </location>
</feature>
<feature type="helix" evidence="2">
    <location>
        <begin position="224"/>
        <end position="233"/>
    </location>
</feature>
<feature type="helix" evidence="2">
    <location>
        <begin position="237"/>
        <end position="239"/>
    </location>
</feature>
<feature type="helix" evidence="2">
    <location>
        <begin position="240"/>
        <end position="252"/>
    </location>
</feature>
<feature type="strand" evidence="2">
    <location>
        <begin position="258"/>
        <end position="261"/>
    </location>
</feature>
<feature type="helix" evidence="2">
    <location>
        <begin position="266"/>
        <end position="272"/>
    </location>
</feature>
<feature type="helix" evidence="2">
    <location>
        <begin position="275"/>
        <end position="280"/>
    </location>
</feature>
<feature type="strand" evidence="2">
    <location>
        <begin position="283"/>
        <end position="286"/>
    </location>
</feature>
<feature type="helix" evidence="2">
    <location>
        <begin position="291"/>
        <end position="305"/>
    </location>
</feature>
<feature type="helix" evidence="2">
    <location>
        <begin position="309"/>
        <end position="311"/>
    </location>
</feature>
<feature type="strand" evidence="2">
    <location>
        <begin position="312"/>
        <end position="316"/>
    </location>
</feature>
<feature type="helix" evidence="2">
    <location>
        <begin position="322"/>
        <end position="332"/>
    </location>
</feature>
<feature type="turn" evidence="2">
    <location>
        <begin position="333"/>
        <end position="335"/>
    </location>
</feature>
<feature type="strand" evidence="2">
    <location>
        <begin position="336"/>
        <end position="342"/>
    </location>
</feature>
<feature type="helix" evidence="2">
    <location>
        <begin position="344"/>
        <end position="347"/>
    </location>
</feature>
<feature type="strand" evidence="2">
    <location>
        <begin position="358"/>
        <end position="365"/>
    </location>
</feature>
<feature type="helix" evidence="2">
    <location>
        <begin position="386"/>
        <end position="395"/>
    </location>
</feature>
<evidence type="ECO:0000255" key="1">
    <source>
        <dbReference type="HAMAP-Rule" id="MF_00570"/>
    </source>
</evidence>
<evidence type="ECO:0007829" key="2">
    <source>
        <dbReference type="PDB" id="1YIR"/>
    </source>
</evidence>
<name>PNCB2_PSEAE</name>
<keyword id="KW-0002">3D-structure</keyword>
<keyword id="KW-0436">Ligase</keyword>
<keyword id="KW-0597">Phosphoprotein</keyword>
<keyword id="KW-0662">Pyridine nucleotide biosynthesis</keyword>
<keyword id="KW-1185">Reference proteome</keyword>
<gene>
    <name evidence="1" type="primary">pncB2</name>
    <name type="ordered locus">PA4376</name>
</gene>
<sequence length="398" mass="45691">MAESAFSERIVQNLLDTDFYKLTMMQAVLHNYPNAEVEWEFRCRNQEDLRLYLPAIREQLEYLAGLAISDEQLAFLERIPFLAPDFIRFLGLFRFNPRYVQTGIENDEFFLRLKGPWLHVILFEVPLLAMISEVRNRARYPAATVEQARERLQEKFDWLRREASAEELAGFKMADFGTRRRFSYRVHEAVVSGLKEDFPGCFVGTSNVHLARKLDLKPLGTMAHEWLMAHQQLGPRLIDSQSAALDCWVREYRGLLGIALTDCITTDAFLRDFDLYFAKLFDGLRHDSGDPLLWAEKTIAHYLKLGIDPLTKTLVFSDGLDLPRALKIYRALQGRINVSFGIGTHFTCDLPGVEPMNIVVKMSACNGHPVAKISDTPGKAQCRDPDFIHYLKHVFQVA</sequence>
<protein>
    <recommendedName>
        <fullName evidence="1">Nicotinate phosphoribosyltransferase 2</fullName>
        <shortName evidence="1">NAPRTase 2</shortName>
        <ecNumber evidence="1">6.3.4.21</ecNumber>
    </recommendedName>
</protein>
<proteinExistence type="evidence at protein level"/>
<comment type="function">
    <text evidence="1">Catalyzes the synthesis of beta-nicotinate D-ribonucleotide from nicotinate and 5-phospho-D-ribose 1-phosphate at the expense of ATP.</text>
</comment>
<comment type="catalytic activity">
    <reaction evidence="1">
        <text>nicotinate + 5-phospho-alpha-D-ribose 1-diphosphate + ATP + H2O = nicotinate beta-D-ribonucleotide + ADP + phosphate + diphosphate</text>
        <dbReference type="Rhea" id="RHEA:36163"/>
        <dbReference type="ChEBI" id="CHEBI:15377"/>
        <dbReference type="ChEBI" id="CHEBI:30616"/>
        <dbReference type="ChEBI" id="CHEBI:32544"/>
        <dbReference type="ChEBI" id="CHEBI:33019"/>
        <dbReference type="ChEBI" id="CHEBI:43474"/>
        <dbReference type="ChEBI" id="CHEBI:57502"/>
        <dbReference type="ChEBI" id="CHEBI:58017"/>
        <dbReference type="ChEBI" id="CHEBI:456216"/>
        <dbReference type="EC" id="6.3.4.21"/>
    </reaction>
</comment>
<comment type="pathway">
    <text evidence="1">Cofactor biosynthesis; NAD(+) biosynthesis; nicotinate D-ribonucleotide from nicotinate: step 1/1.</text>
</comment>
<comment type="PTM">
    <text evidence="1">Transiently phosphorylated on a His residue during the reaction cycle. Phosphorylation strongly increases the affinity for substrates and increases the rate of nicotinate D-ribonucleotide production. Dephosphorylation regenerates the low-affinity form of the enzyme, leading to product release.</text>
</comment>
<comment type="similarity">
    <text evidence="1">Belongs to the NAPRTase family.</text>
</comment>
<dbReference type="EC" id="6.3.4.21" evidence="1"/>
<dbReference type="EMBL" id="AE004091">
    <property type="protein sequence ID" value="AAG07764.1"/>
    <property type="molecule type" value="Genomic_DNA"/>
</dbReference>
<dbReference type="PIR" id="F83099">
    <property type="entry name" value="F83099"/>
</dbReference>
<dbReference type="RefSeq" id="NP_253066.1">
    <property type="nucleotide sequence ID" value="NC_002516.2"/>
</dbReference>
<dbReference type="PDB" id="1YIR">
    <property type="method" value="X-ray"/>
    <property type="resolution" value="2.10 A"/>
    <property type="chains" value="A/B/C/D=2-398"/>
</dbReference>
<dbReference type="PDBsum" id="1YIR"/>
<dbReference type="SMR" id="Q9HW26"/>
<dbReference type="FunCoup" id="Q9HW26">
    <property type="interactions" value="411"/>
</dbReference>
<dbReference type="STRING" id="208964.PA4376"/>
<dbReference type="PaxDb" id="208964-PA4376"/>
<dbReference type="DNASU" id="881378"/>
<dbReference type="GeneID" id="881378"/>
<dbReference type="KEGG" id="pae:PA4376"/>
<dbReference type="PATRIC" id="fig|208964.12.peg.4583"/>
<dbReference type="PseudoCAP" id="PA4376"/>
<dbReference type="HOGENOM" id="CLU_030991_1_0_6"/>
<dbReference type="InParanoid" id="Q9HW26"/>
<dbReference type="OrthoDB" id="9771406at2"/>
<dbReference type="PhylomeDB" id="Q9HW26"/>
<dbReference type="BioCyc" id="PAER208964:G1FZ6-4462-MONOMER"/>
<dbReference type="UniPathway" id="UPA00253">
    <property type="reaction ID" value="UER00457"/>
</dbReference>
<dbReference type="EvolutionaryTrace" id="Q9HW26"/>
<dbReference type="Proteomes" id="UP000002438">
    <property type="component" value="Chromosome"/>
</dbReference>
<dbReference type="GO" id="GO:0005829">
    <property type="term" value="C:cytosol"/>
    <property type="evidence" value="ECO:0000318"/>
    <property type="project" value="GO_Central"/>
</dbReference>
<dbReference type="GO" id="GO:0004516">
    <property type="term" value="F:nicotinate phosphoribosyltransferase activity"/>
    <property type="evidence" value="ECO:0000318"/>
    <property type="project" value="GO_Central"/>
</dbReference>
<dbReference type="GO" id="GO:0034355">
    <property type="term" value="P:NAD biosynthetic process via the salvage pathway"/>
    <property type="evidence" value="ECO:0000318"/>
    <property type="project" value="GO_Central"/>
</dbReference>
<dbReference type="CDD" id="cd01401">
    <property type="entry name" value="PncB_like"/>
    <property type="match status" value="1"/>
</dbReference>
<dbReference type="FunFam" id="3.20.140.10:FF:000001">
    <property type="entry name" value="Nicotinate phosphoribosyltransferase"/>
    <property type="match status" value="1"/>
</dbReference>
<dbReference type="Gene3D" id="3.20.140.10">
    <property type="entry name" value="nicotinate phosphoribosyltransferase"/>
    <property type="match status" value="1"/>
</dbReference>
<dbReference type="HAMAP" id="MF_00570">
    <property type="entry name" value="NAPRTase"/>
    <property type="match status" value="1"/>
</dbReference>
<dbReference type="InterPro" id="IPR041525">
    <property type="entry name" value="N/Namide_PRibTrfase"/>
</dbReference>
<dbReference type="InterPro" id="IPR040727">
    <property type="entry name" value="NAPRTase_N"/>
</dbReference>
<dbReference type="InterPro" id="IPR006406">
    <property type="entry name" value="Nic_PRibTrfase"/>
</dbReference>
<dbReference type="InterPro" id="IPR007229">
    <property type="entry name" value="Nic_PRibTrfase-Fam"/>
</dbReference>
<dbReference type="InterPro" id="IPR036068">
    <property type="entry name" value="Nicotinate_pribotase-like_C"/>
</dbReference>
<dbReference type="NCBIfam" id="TIGR01514">
    <property type="entry name" value="NAPRTase"/>
    <property type="match status" value="1"/>
</dbReference>
<dbReference type="NCBIfam" id="NF003704">
    <property type="entry name" value="PRK05321.1"/>
    <property type="match status" value="1"/>
</dbReference>
<dbReference type="PANTHER" id="PTHR11098">
    <property type="entry name" value="NICOTINATE PHOSPHORIBOSYLTRANSFERASE"/>
    <property type="match status" value="1"/>
</dbReference>
<dbReference type="PANTHER" id="PTHR11098:SF1">
    <property type="entry name" value="NICOTINATE PHOSPHORIBOSYLTRANSFERASE"/>
    <property type="match status" value="1"/>
</dbReference>
<dbReference type="Pfam" id="PF04095">
    <property type="entry name" value="NAPRTase"/>
    <property type="match status" value="1"/>
</dbReference>
<dbReference type="Pfam" id="PF17767">
    <property type="entry name" value="NAPRTase_N"/>
    <property type="match status" value="1"/>
</dbReference>
<dbReference type="PIRSF" id="PIRSF000484">
    <property type="entry name" value="NAPRT"/>
    <property type="match status" value="1"/>
</dbReference>
<dbReference type="SUPFAM" id="SSF51690">
    <property type="entry name" value="Nicotinate/Quinolinate PRTase C-terminal domain-like"/>
    <property type="match status" value="1"/>
</dbReference>
<dbReference type="SUPFAM" id="SSF54675">
    <property type="entry name" value="Nicotinate/Quinolinate PRTase N-terminal domain-like"/>
    <property type="match status" value="1"/>
</dbReference>